<evidence type="ECO:0000255" key="1">
    <source>
        <dbReference type="HAMAP-Rule" id="MF_00021"/>
    </source>
</evidence>
<keyword id="KW-0067">ATP-binding</keyword>
<keyword id="KW-0963">Cytoplasm</keyword>
<keyword id="KW-0547">Nucleotide-binding</keyword>
<keyword id="KW-0694">RNA-binding</keyword>
<keyword id="KW-0784">Thiamine biosynthesis</keyword>
<keyword id="KW-0808">Transferase</keyword>
<keyword id="KW-0820">tRNA-binding</keyword>
<comment type="function">
    <text evidence="1">Catalyzes the ATP-dependent transfer of a sulfur to tRNA to produce 4-thiouridine in position 8 of tRNAs, which functions as a near-UV photosensor. Also catalyzes the transfer of sulfur to the sulfur carrier protein ThiS, forming ThiS-thiocarboxylate. This is a step in the synthesis of thiazole, in the thiamine biosynthesis pathway. The sulfur is donated as persulfide by IscS.</text>
</comment>
<comment type="catalytic activity">
    <reaction evidence="1">
        <text>[ThiI sulfur-carrier protein]-S-sulfanyl-L-cysteine + a uridine in tRNA + 2 reduced [2Fe-2S]-[ferredoxin] + ATP + H(+) = [ThiI sulfur-carrier protein]-L-cysteine + a 4-thiouridine in tRNA + 2 oxidized [2Fe-2S]-[ferredoxin] + AMP + diphosphate</text>
        <dbReference type="Rhea" id="RHEA:24176"/>
        <dbReference type="Rhea" id="RHEA-COMP:10000"/>
        <dbReference type="Rhea" id="RHEA-COMP:10001"/>
        <dbReference type="Rhea" id="RHEA-COMP:13337"/>
        <dbReference type="Rhea" id="RHEA-COMP:13338"/>
        <dbReference type="Rhea" id="RHEA-COMP:13339"/>
        <dbReference type="Rhea" id="RHEA-COMP:13340"/>
        <dbReference type="ChEBI" id="CHEBI:15378"/>
        <dbReference type="ChEBI" id="CHEBI:29950"/>
        <dbReference type="ChEBI" id="CHEBI:30616"/>
        <dbReference type="ChEBI" id="CHEBI:33019"/>
        <dbReference type="ChEBI" id="CHEBI:33737"/>
        <dbReference type="ChEBI" id="CHEBI:33738"/>
        <dbReference type="ChEBI" id="CHEBI:61963"/>
        <dbReference type="ChEBI" id="CHEBI:65315"/>
        <dbReference type="ChEBI" id="CHEBI:136798"/>
        <dbReference type="ChEBI" id="CHEBI:456215"/>
        <dbReference type="EC" id="2.8.1.4"/>
    </reaction>
</comment>
<comment type="catalytic activity">
    <reaction evidence="1">
        <text>[ThiS sulfur-carrier protein]-C-terminal Gly-Gly-AMP + S-sulfanyl-L-cysteinyl-[cysteine desulfurase] + AH2 = [ThiS sulfur-carrier protein]-C-terminal-Gly-aminoethanethioate + L-cysteinyl-[cysteine desulfurase] + A + AMP + 2 H(+)</text>
        <dbReference type="Rhea" id="RHEA:43340"/>
        <dbReference type="Rhea" id="RHEA-COMP:12157"/>
        <dbReference type="Rhea" id="RHEA-COMP:12158"/>
        <dbReference type="Rhea" id="RHEA-COMP:12910"/>
        <dbReference type="Rhea" id="RHEA-COMP:19908"/>
        <dbReference type="ChEBI" id="CHEBI:13193"/>
        <dbReference type="ChEBI" id="CHEBI:15378"/>
        <dbReference type="ChEBI" id="CHEBI:17499"/>
        <dbReference type="ChEBI" id="CHEBI:29950"/>
        <dbReference type="ChEBI" id="CHEBI:61963"/>
        <dbReference type="ChEBI" id="CHEBI:90618"/>
        <dbReference type="ChEBI" id="CHEBI:232372"/>
        <dbReference type="ChEBI" id="CHEBI:456215"/>
    </reaction>
</comment>
<comment type="pathway">
    <text evidence="1">Cofactor biosynthesis; thiamine diphosphate biosynthesis.</text>
</comment>
<comment type="subcellular location">
    <subcellularLocation>
        <location evidence="1">Cytoplasm</location>
    </subcellularLocation>
</comment>
<comment type="similarity">
    <text evidence="1">Belongs to the ThiI family.</text>
</comment>
<accession>Q71Z75</accession>
<dbReference type="EC" id="2.8.1.4" evidence="1"/>
<dbReference type="EMBL" id="AE017262">
    <property type="protein sequence ID" value="AAT04389.1"/>
    <property type="molecule type" value="Genomic_DNA"/>
</dbReference>
<dbReference type="RefSeq" id="WP_003727373.1">
    <property type="nucleotide sequence ID" value="NC_002973.6"/>
</dbReference>
<dbReference type="SMR" id="Q71Z75"/>
<dbReference type="KEGG" id="lmf:LMOf2365_1614"/>
<dbReference type="HOGENOM" id="CLU_037952_4_0_9"/>
<dbReference type="UniPathway" id="UPA00060"/>
<dbReference type="GO" id="GO:0005829">
    <property type="term" value="C:cytosol"/>
    <property type="evidence" value="ECO:0007669"/>
    <property type="project" value="TreeGrafter"/>
</dbReference>
<dbReference type="GO" id="GO:0005524">
    <property type="term" value="F:ATP binding"/>
    <property type="evidence" value="ECO:0007669"/>
    <property type="project" value="UniProtKB-UniRule"/>
</dbReference>
<dbReference type="GO" id="GO:0004810">
    <property type="term" value="F:CCA tRNA nucleotidyltransferase activity"/>
    <property type="evidence" value="ECO:0007669"/>
    <property type="project" value="InterPro"/>
</dbReference>
<dbReference type="GO" id="GO:0000049">
    <property type="term" value="F:tRNA binding"/>
    <property type="evidence" value="ECO:0007669"/>
    <property type="project" value="UniProtKB-UniRule"/>
</dbReference>
<dbReference type="GO" id="GO:0140741">
    <property type="term" value="F:tRNA-uracil-4 sulfurtransferase activity"/>
    <property type="evidence" value="ECO:0007669"/>
    <property type="project" value="UniProtKB-EC"/>
</dbReference>
<dbReference type="GO" id="GO:0009228">
    <property type="term" value="P:thiamine biosynthetic process"/>
    <property type="evidence" value="ECO:0007669"/>
    <property type="project" value="UniProtKB-KW"/>
</dbReference>
<dbReference type="GO" id="GO:0009229">
    <property type="term" value="P:thiamine diphosphate biosynthetic process"/>
    <property type="evidence" value="ECO:0007669"/>
    <property type="project" value="UniProtKB-UniRule"/>
</dbReference>
<dbReference type="GO" id="GO:0052837">
    <property type="term" value="P:thiazole biosynthetic process"/>
    <property type="evidence" value="ECO:0007669"/>
    <property type="project" value="TreeGrafter"/>
</dbReference>
<dbReference type="GO" id="GO:0002937">
    <property type="term" value="P:tRNA 4-thiouridine biosynthesis"/>
    <property type="evidence" value="ECO:0007669"/>
    <property type="project" value="TreeGrafter"/>
</dbReference>
<dbReference type="CDD" id="cd01712">
    <property type="entry name" value="PPase_ThiI"/>
    <property type="match status" value="1"/>
</dbReference>
<dbReference type="CDD" id="cd11716">
    <property type="entry name" value="THUMP_ThiI"/>
    <property type="match status" value="1"/>
</dbReference>
<dbReference type="FunFam" id="3.30.2130.30:FF:000011">
    <property type="entry name" value="Probable tRNA sulfurtransferase"/>
    <property type="match status" value="1"/>
</dbReference>
<dbReference type="FunFam" id="3.40.50.620:FF:000053">
    <property type="entry name" value="Probable tRNA sulfurtransferase"/>
    <property type="match status" value="1"/>
</dbReference>
<dbReference type="Gene3D" id="3.30.2130.30">
    <property type="match status" value="1"/>
</dbReference>
<dbReference type="Gene3D" id="3.40.50.620">
    <property type="entry name" value="HUPs"/>
    <property type="match status" value="1"/>
</dbReference>
<dbReference type="HAMAP" id="MF_00021">
    <property type="entry name" value="ThiI"/>
    <property type="match status" value="1"/>
</dbReference>
<dbReference type="InterPro" id="IPR014729">
    <property type="entry name" value="Rossmann-like_a/b/a_fold"/>
</dbReference>
<dbReference type="InterPro" id="IPR020536">
    <property type="entry name" value="ThiI_AANH"/>
</dbReference>
<dbReference type="InterPro" id="IPR054173">
    <property type="entry name" value="ThiI_fer"/>
</dbReference>
<dbReference type="InterPro" id="IPR049961">
    <property type="entry name" value="ThiI_N"/>
</dbReference>
<dbReference type="InterPro" id="IPR004114">
    <property type="entry name" value="THUMP_dom"/>
</dbReference>
<dbReference type="InterPro" id="IPR049962">
    <property type="entry name" value="THUMP_ThiI"/>
</dbReference>
<dbReference type="InterPro" id="IPR003720">
    <property type="entry name" value="tRNA_STrfase"/>
</dbReference>
<dbReference type="InterPro" id="IPR050102">
    <property type="entry name" value="tRNA_sulfurtransferase_ThiI"/>
</dbReference>
<dbReference type="NCBIfam" id="TIGR00342">
    <property type="entry name" value="tRNA uracil 4-sulfurtransferase ThiI"/>
    <property type="match status" value="1"/>
</dbReference>
<dbReference type="PANTHER" id="PTHR43209">
    <property type="entry name" value="TRNA SULFURTRANSFERASE"/>
    <property type="match status" value="1"/>
</dbReference>
<dbReference type="PANTHER" id="PTHR43209:SF1">
    <property type="entry name" value="TRNA SULFURTRANSFERASE"/>
    <property type="match status" value="1"/>
</dbReference>
<dbReference type="Pfam" id="PF02568">
    <property type="entry name" value="ThiI"/>
    <property type="match status" value="1"/>
</dbReference>
<dbReference type="Pfam" id="PF22025">
    <property type="entry name" value="ThiI_fer"/>
    <property type="match status" value="1"/>
</dbReference>
<dbReference type="Pfam" id="PF02926">
    <property type="entry name" value="THUMP"/>
    <property type="match status" value="1"/>
</dbReference>
<dbReference type="SMART" id="SM00981">
    <property type="entry name" value="THUMP"/>
    <property type="match status" value="1"/>
</dbReference>
<dbReference type="SUPFAM" id="SSF52402">
    <property type="entry name" value="Adenine nucleotide alpha hydrolases-like"/>
    <property type="match status" value="1"/>
</dbReference>
<dbReference type="SUPFAM" id="SSF143437">
    <property type="entry name" value="THUMP domain-like"/>
    <property type="match status" value="1"/>
</dbReference>
<dbReference type="PROSITE" id="PS51165">
    <property type="entry name" value="THUMP"/>
    <property type="match status" value="1"/>
</dbReference>
<reference key="1">
    <citation type="journal article" date="2004" name="Nucleic Acids Res.">
        <title>Whole genome comparisons of serotype 4b and 1/2a strains of the food-borne pathogen Listeria monocytogenes reveal new insights into the core genome components of this species.</title>
        <authorList>
            <person name="Nelson K.E."/>
            <person name="Fouts D.E."/>
            <person name="Mongodin E.F."/>
            <person name="Ravel J."/>
            <person name="DeBoy R.T."/>
            <person name="Kolonay J.F."/>
            <person name="Rasko D.A."/>
            <person name="Angiuoli S.V."/>
            <person name="Gill S.R."/>
            <person name="Paulsen I.T."/>
            <person name="Peterson J.D."/>
            <person name="White O."/>
            <person name="Nelson W.C."/>
            <person name="Nierman W.C."/>
            <person name="Beanan M.J."/>
            <person name="Brinkac L.M."/>
            <person name="Daugherty S.C."/>
            <person name="Dodson R.J."/>
            <person name="Durkin A.S."/>
            <person name="Madupu R."/>
            <person name="Haft D.H."/>
            <person name="Selengut J."/>
            <person name="Van Aken S.E."/>
            <person name="Khouri H.M."/>
            <person name="Fedorova N."/>
            <person name="Forberger H.A."/>
            <person name="Tran B."/>
            <person name="Kathariou S."/>
            <person name="Wonderling L.D."/>
            <person name="Uhlich G.A."/>
            <person name="Bayles D.O."/>
            <person name="Luchansky J.B."/>
            <person name="Fraser C.M."/>
        </authorList>
    </citation>
    <scope>NUCLEOTIDE SEQUENCE [LARGE SCALE GENOMIC DNA]</scope>
    <source>
        <strain>F2365</strain>
    </source>
</reference>
<name>THII_LISMF</name>
<proteinExistence type="inferred from homology"/>
<feature type="chain" id="PRO_0000154846" description="Probable tRNA sulfurtransferase">
    <location>
        <begin position="1"/>
        <end position="403"/>
    </location>
</feature>
<feature type="domain" description="THUMP" evidence="1">
    <location>
        <begin position="60"/>
        <end position="165"/>
    </location>
</feature>
<feature type="binding site" evidence="1">
    <location>
        <begin position="183"/>
        <end position="184"/>
    </location>
    <ligand>
        <name>ATP</name>
        <dbReference type="ChEBI" id="CHEBI:30616"/>
    </ligand>
</feature>
<feature type="binding site" evidence="1">
    <location>
        <begin position="208"/>
        <end position="209"/>
    </location>
    <ligand>
        <name>ATP</name>
        <dbReference type="ChEBI" id="CHEBI:30616"/>
    </ligand>
</feature>
<feature type="binding site" evidence="1">
    <location>
        <position position="265"/>
    </location>
    <ligand>
        <name>ATP</name>
        <dbReference type="ChEBI" id="CHEBI:30616"/>
    </ligand>
</feature>
<feature type="binding site" evidence="1">
    <location>
        <position position="287"/>
    </location>
    <ligand>
        <name>ATP</name>
        <dbReference type="ChEBI" id="CHEBI:30616"/>
    </ligand>
</feature>
<feature type="binding site" evidence="1">
    <location>
        <position position="296"/>
    </location>
    <ligand>
        <name>ATP</name>
        <dbReference type="ChEBI" id="CHEBI:30616"/>
    </ligand>
</feature>
<organism>
    <name type="scientific">Listeria monocytogenes serotype 4b (strain F2365)</name>
    <dbReference type="NCBI Taxonomy" id="265669"/>
    <lineage>
        <taxon>Bacteria</taxon>
        <taxon>Bacillati</taxon>
        <taxon>Bacillota</taxon>
        <taxon>Bacilli</taxon>
        <taxon>Bacillales</taxon>
        <taxon>Listeriaceae</taxon>
        <taxon>Listeria</taxon>
    </lineage>
</organism>
<gene>
    <name evidence="1" type="primary">thiI</name>
    <name type="ordered locus">LMOf2365_1614</name>
</gene>
<sequence length="403" mass="45030">MEFDRMLIRYGELSTKGKNRKQFVTKLAQNVKRAMTDLPEVRIHGERDRMYIILNGADYQLVEERLKPIFGIQSFSPAVRVNLDVEEVKAAALALVQDAHEENGTFKVAARRSHREFPLDSNEINQEIGAYVLQNMEDLTVNVKNPDVKLTIDVRKEGVFLSCRTILGAAGLPVGSSGRAMLMLSGGIDSPVAGYLAQKRGVEIEAVHFHSPPYTSEQAKQKAVDLAAKLAKYSGQVQMHIVPFTEIQEVIKQQIPESVIMTVTRRMMLRITDELRRRRNGLAIVNGESLGQVASQTLESMLAINAVTATPIIRPVVSMDKNEIIQIAQKIDTYNLSVQPFEDCCTIFTPPSPKTKPKLDKIEHYESFTDFEALIAKALDNIETISVNVAETAQVKDEFADLF</sequence>
<protein>
    <recommendedName>
        <fullName evidence="1">Probable tRNA sulfurtransferase</fullName>
        <ecNumber evidence="1">2.8.1.4</ecNumber>
    </recommendedName>
    <alternativeName>
        <fullName evidence="1">Sulfur carrier protein ThiS sulfurtransferase</fullName>
    </alternativeName>
    <alternativeName>
        <fullName evidence="1">Thiamine biosynthesis protein ThiI</fullName>
    </alternativeName>
    <alternativeName>
        <fullName evidence="1">tRNA 4-thiouridine synthase</fullName>
    </alternativeName>
</protein>